<name>RBM10_MOUSE</name>
<evidence type="ECO:0000250" key="1"/>
<evidence type="ECO:0000250" key="2">
    <source>
        <dbReference type="UniProtKB" id="P70501"/>
    </source>
</evidence>
<evidence type="ECO:0000250" key="3">
    <source>
        <dbReference type="UniProtKB" id="P98175"/>
    </source>
</evidence>
<evidence type="ECO:0000255" key="4">
    <source>
        <dbReference type="PROSITE-ProRule" id="PRU00042"/>
    </source>
</evidence>
<evidence type="ECO:0000255" key="5">
    <source>
        <dbReference type="PROSITE-ProRule" id="PRU00092"/>
    </source>
</evidence>
<evidence type="ECO:0000255" key="6">
    <source>
        <dbReference type="PROSITE-ProRule" id="PRU00176"/>
    </source>
</evidence>
<evidence type="ECO:0000255" key="7">
    <source>
        <dbReference type="PROSITE-ProRule" id="PRU00322"/>
    </source>
</evidence>
<evidence type="ECO:0000256" key="8">
    <source>
        <dbReference type="SAM" id="MobiDB-lite"/>
    </source>
</evidence>
<evidence type="ECO:0000303" key="9">
    <source>
    </source>
</evidence>
<evidence type="ECO:0000303" key="10">
    <source>
    </source>
</evidence>
<evidence type="ECO:0000305" key="11"/>
<evidence type="ECO:0000312" key="12">
    <source>
        <dbReference type="MGI" id="MGI:2384310"/>
    </source>
</evidence>
<evidence type="ECO:0007744" key="13">
    <source>
    </source>
</evidence>
<evidence type="ECO:0007744" key="14">
    <source>
    </source>
</evidence>
<evidence type="ECO:0007744" key="15">
    <source>
    </source>
</evidence>
<evidence type="ECO:0007744" key="16">
    <source>
    </source>
</evidence>
<evidence type="ECO:0007744" key="17">
    <source>
    </source>
</evidence>
<reference key="1">
    <citation type="journal article" date="2003" name="DNA Res.">
        <title>Prediction of the coding sequences of mouse homologues of KIAA gene: II. The complete nucleotide sequences of 400 mouse KIAA-homologous cDNAs identified by screening of terminal sequences of cDNA clones randomly sampled from size-fractionated libraries.</title>
        <authorList>
            <person name="Okazaki N."/>
            <person name="Kikuno R."/>
            <person name="Ohara R."/>
            <person name="Inamoto S."/>
            <person name="Aizawa H."/>
            <person name="Yuasa S."/>
            <person name="Nakajima D."/>
            <person name="Nagase T."/>
            <person name="Ohara O."/>
            <person name="Koga H."/>
        </authorList>
    </citation>
    <scope>NUCLEOTIDE SEQUENCE [LARGE SCALE MRNA] (ISOFORM 2)</scope>
    <source>
        <tissue>Brain</tissue>
    </source>
</reference>
<reference key="2">
    <citation type="journal article" date="2005" name="Science">
        <title>The transcriptional landscape of the mammalian genome.</title>
        <authorList>
            <person name="Carninci P."/>
            <person name="Kasukawa T."/>
            <person name="Katayama S."/>
            <person name="Gough J."/>
            <person name="Frith M.C."/>
            <person name="Maeda N."/>
            <person name="Oyama R."/>
            <person name="Ravasi T."/>
            <person name="Lenhard B."/>
            <person name="Wells C."/>
            <person name="Kodzius R."/>
            <person name="Shimokawa K."/>
            <person name="Bajic V.B."/>
            <person name="Brenner S.E."/>
            <person name="Batalov S."/>
            <person name="Forrest A.R."/>
            <person name="Zavolan M."/>
            <person name="Davis M.J."/>
            <person name="Wilming L.G."/>
            <person name="Aidinis V."/>
            <person name="Allen J.E."/>
            <person name="Ambesi-Impiombato A."/>
            <person name="Apweiler R."/>
            <person name="Aturaliya R.N."/>
            <person name="Bailey T.L."/>
            <person name="Bansal M."/>
            <person name="Baxter L."/>
            <person name="Beisel K.W."/>
            <person name="Bersano T."/>
            <person name="Bono H."/>
            <person name="Chalk A.M."/>
            <person name="Chiu K.P."/>
            <person name="Choudhary V."/>
            <person name="Christoffels A."/>
            <person name="Clutterbuck D.R."/>
            <person name="Crowe M.L."/>
            <person name="Dalla E."/>
            <person name="Dalrymple B.P."/>
            <person name="de Bono B."/>
            <person name="Della Gatta G."/>
            <person name="di Bernardo D."/>
            <person name="Down T."/>
            <person name="Engstrom P."/>
            <person name="Fagiolini M."/>
            <person name="Faulkner G."/>
            <person name="Fletcher C.F."/>
            <person name="Fukushima T."/>
            <person name="Furuno M."/>
            <person name="Futaki S."/>
            <person name="Gariboldi M."/>
            <person name="Georgii-Hemming P."/>
            <person name="Gingeras T.R."/>
            <person name="Gojobori T."/>
            <person name="Green R.E."/>
            <person name="Gustincich S."/>
            <person name="Harbers M."/>
            <person name="Hayashi Y."/>
            <person name="Hensch T.K."/>
            <person name="Hirokawa N."/>
            <person name="Hill D."/>
            <person name="Huminiecki L."/>
            <person name="Iacono M."/>
            <person name="Ikeo K."/>
            <person name="Iwama A."/>
            <person name="Ishikawa T."/>
            <person name="Jakt M."/>
            <person name="Kanapin A."/>
            <person name="Katoh M."/>
            <person name="Kawasawa Y."/>
            <person name="Kelso J."/>
            <person name="Kitamura H."/>
            <person name="Kitano H."/>
            <person name="Kollias G."/>
            <person name="Krishnan S.P."/>
            <person name="Kruger A."/>
            <person name="Kummerfeld S.K."/>
            <person name="Kurochkin I.V."/>
            <person name="Lareau L.F."/>
            <person name="Lazarevic D."/>
            <person name="Lipovich L."/>
            <person name="Liu J."/>
            <person name="Liuni S."/>
            <person name="McWilliam S."/>
            <person name="Madan Babu M."/>
            <person name="Madera M."/>
            <person name="Marchionni L."/>
            <person name="Matsuda H."/>
            <person name="Matsuzawa S."/>
            <person name="Miki H."/>
            <person name="Mignone F."/>
            <person name="Miyake S."/>
            <person name="Morris K."/>
            <person name="Mottagui-Tabar S."/>
            <person name="Mulder N."/>
            <person name="Nakano N."/>
            <person name="Nakauchi H."/>
            <person name="Ng P."/>
            <person name="Nilsson R."/>
            <person name="Nishiguchi S."/>
            <person name="Nishikawa S."/>
            <person name="Nori F."/>
            <person name="Ohara O."/>
            <person name="Okazaki Y."/>
            <person name="Orlando V."/>
            <person name="Pang K.C."/>
            <person name="Pavan W.J."/>
            <person name="Pavesi G."/>
            <person name="Pesole G."/>
            <person name="Petrovsky N."/>
            <person name="Piazza S."/>
            <person name="Reed J."/>
            <person name="Reid J.F."/>
            <person name="Ring B.Z."/>
            <person name="Ringwald M."/>
            <person name="Rost B."/>
            <person name="Ruan Y."/>
            <person name="Salzberg S.L."/>
            <person name="Sandelin A."/>
            <person name="Schneider C."/>
            <person name="Schoenbach C."/>
            <person name="Sekiguchi K."/>
            <person name="Semple C.A."/>
            <person name="Seno S."/>
            <person name="Sessa L."/>
            <person name="Sheng Y."/>
            <person name="Shibata Y."/>
            <person name="Shimada H."/>
            <person name="Shimada K."/>
            <person name="Silva D."/>
            <person name="Sinclair B."/>
            <person name="Sperling S."/>
            <person name="Stupka E."/>
            <person name="Sugiura K."/>
            <person name="Sultana R."/>
            <person name="Takenaka Y."/>
            <person name="Taki K."/>
            <person name="Tammoja K."/>
            <person name="Tan S.L."/>
            <person name="Tang S."/>
            <person name="Taylor M.S."/>
            <person name="Tegner J."/>
            <person name="Teichmann S.A."/>
            <person name="Ueda H.R."/>
            <person name="van Nimwegen E."/>
            <person name="Verardo R."/>
            <person name="Wei C.L."/>
            <person name="Yagi K."/>
            <person name="Yamanishi H."/>
            <person name="Zabarovsky E."/>
            <person name="Zhu S."/>
            <person name="Zimmer A."/>
            <person name="Hide W."/>
            <person name="Bult C."/>
            <person name="Grimmond S.M."/>
            <person name="Teasdale R.D."/>
            <person name="Liu E.T."/>
            <person name="Brusic V."/>
            <person name="Quackenbush J."/>
            <person name="Wahlestedt C."/>
            <person name="Mattick J.S."/>
            <person name="Hume D.A."/>
            <person name="Kai C."/>
            <person name="Sasaki D."/>
            <person name="Tomaru Y."/>
            <person name="Fukuda S."/>
            <person name="Kanamori-Katayama M."/>
            <person name="Suzuki M."/>
            <person name="Aoki J."/>
            <person name="Arakawa T."/>
            <person name="Iida J."/>
            <person name="Imamura K."/>
            <person name="Itoh M."/>
            <person name="Kato T."/>
            <person name="Kawaji H."/>
            <person name="Kawagashira N."/>
            <person name="Kawashima T."/>
            <person name="Kojima M."/>
            <person name="Kondo S."/>
            <person name="Konno H."/>
            <person name="Nakano K."/>
            <person name="Ninomiya N."/>
            <person name="Nishio T."/>
            <person name="Okada M."/>
            <person name="Plessy C."/>
            <person name="Shibata K."/>
            <person name="Shiraki T."/>
            <person name="Suzuki S."/>
            <person name="Tagami M."/>
            <person name="Waki K."/>
            <person name="Watahiki A."/>
            <person name="Okamura-Oho Y."/>
            <person name="Suzuki H."/>
            <person name="Kawai J."/>
            <person name="Hayashizaki Y."/>
        </authorList>
    </citation>
    <scope>NUCLEOTIDE SEQUENCE [LARGE SCALE MRNA] (ISOFORMS 1; 2 AND 3)</scope>
    <source>
        <strain>C57BL/6J</strain>
        <strain>NOD</strain>
        <tissue>Amnion</tissue>
        <tissue>Liver</tissue>
        <tissue>Thymus</tissue>
    </source>
</reference>
<reference key="3">
    <citation type="journal article" date="2009" name="PLoS Biol.">
        <title>Lineage-specific biology revealed by a finished genome assembly of the mouse.</title>
        <authorList>
            <person name="Church D.M."/>
            <person name="Goodstadt L."/>
            <person name="Hillier L.W."/>
            <person name="Zody M.C."/>
            <person name="Goldstein S."/>
            <person name="She X."/>
            <person name="Bult C.J."/>
            <person name="Agarwala R."/>
            <person name="Cherry J.L."/>
            <person name="DiCuccio M."/>
            <person name="Hlavina W."/>
            <person name="Kapustin Y."/>
            <person name="Meric P."/>
            <person name="Maglott D."/>
            <person name="Birtle Z."/>
            <person name="Marques A.C."/>
            <person name="Graves T."/>
            <person name="Zhou S."/>
            <person name="Teague B."/>
            <person name="Potamousis K."/>
            <person name="Churas C."/>
            <person name="Place M."/>
            <person name="Herschleb J."/>
            <person name="Runnheim R."/>
            <person name="Forrest D."/>
            <person name="Amos-Landgraf J."/>
            <person name="Schwartz D.C."/>
            <person name="Cheng Z."/>
            <person name="Lindblad-Toh K."/>
            <person name="Eichler E.E."/>
            <person name="Ponting C.P."/>
        </authorList>
    </citation>
    <scope>NUCLEOTIDE SEQUENCE [LARGE SCALE GENOMIC DNA]</scope>
    <source>
        <strain>C57BL/6J</strain>
    </source>
</reference>
<reference key="4">
    <citation type="journal article" date="2004" name="Genome Res.">
        <title>The status, quality, and expansion of the NIH full-length cDNA project: the Mammalian Gene Collection (MGC).</title>
        <authorList>
            <consortium name="The MGC Project Team"/>
        </authorList>
    </citation>
    <scope>NUCLEOTIDE SEQUENCE [LARGE SCALE MRNA] (ISOFORM 1)</scope>
    <source>
        <strain>FVB/N</strain>
        <tissue>Mammary tumor</tissue>
    </source>
</reference>
<reference key="5">
    <citation type="journal article" date="2004" name="Mol. Cell. Proteomics">
        <title>Phosphoproteomic analysis of the developing mouse brain.</title>
        <authorList>
            <person name="Ballif B.A."/>
            <person name="Villen J."/>
            <person name="Beausoleil S.A."/>
            <person name="Schwartz D."/>
            <person name="Gygi S.P."/>
        </authorList>
    </citation>
    <scope>IDENTIFICATION BY MASS SPECTROMETRY [LARGE SCALE ANALYSIS]</scope>
    <source>
        <tissue>Embryonic brain</tissue>
    </source>
</reference>
<reference key="6">
    <citation type="journal article" date="2007" name="Proc. Natl. Acad. Sci. U.S.A.">
        <title>Large-scale phosphorylation analysis of mouse liver.</title>
        <authorList>
            <person name="Villen J."/>
            <person name="Beausoleil S.A."/>
            <person name="Gerber S.A."/>
            <person name="Gygi S.P."/>
        </authorList>
    </citation>
    <scope>PHOSPHORYLATION [LARGE SCALE ANALYSIS] AT SER-736 AND SER-738</scope>
    <scope>IDENTIFICATION BY MASS SPECTROMETRY [LARGE SCALE ANALYSIS]</scope>
    <source>
        <tissue>Liver</tissue>
    </source>
</reference>
<reference key="7">
    <citation type="journal article" date="2008" name="J. Proteome Res.">
        <title>Specific phosphopeptide enrichment with immobilized titanium ion affinity chromatography adsorbent for phosphoproteome analysis.</title>
        <authorList>
            <person name="Zhou H."/>
            <person name="Ye M."/>
            <person name="Dong J."/>
            <person name="Han G."/>
            <person name="Jiang X."/>
            <person name="Wu R."/>
            <person name="Zou H."/>
        </authorList>
    </citation>
    <scope>PHOSPHORYLATION [LARGE SCALE ANALYSIS] AT SER-733; SER-736 AND SER-738</scope>
    <scope>IDENTIFICATION BY MASS SPECTROMETRY [LARGE SCALE ANALYSIS]</scope>
    <source>
        <tissue>Liver</tissue>
    </source>
</reference>
<reference key="8">
    <citation type="journal article" date="2009" name="Immunity">
        <title>The phagosomal proteome in interferon-gamma-activated macrophages.</title>
        <authorList>
            <person name="Trost M."/>
            <person name="English L."/>
            <person name="Lemieux S."/>
            <person name="Courcelles M."/>
            <person name="Desjardins M."/>
            <person name="Thibault P."/>
        </authorList>
    </citation>
    <scope>PHOSPHORYLATION [LARGE SCALE ANALYSIS] AT SER-733; SER-736 AND SER-738</scope>
    <scope>IDENTIFICATION BY MASS SPECTROMETRY [LARGE SCALE ANALYSIS]</scope>
</reference>
<reference key="9">
    <citation type="journal article" date="2010" name="Cell">
        <title>A tissue-specific atlas of mouse protein phosphorylation and expression.</title>
        <authorList>
            <person name="Huttlin E.L."/>
            <person name="Jedrychowski M.P."/>
            <person name="Elias J.E."/>
            <person name="Goswami T."/>
            <person name="Rad R."/>
            <person name="Beausoleil S.A."/>
            <person name="Villen J."/>
            <person name="Haas W."/>
            <person name="Sowa M.E."/>
            <person name="Gygi S.P."/>
        </authorList>
    </citation>
    <scope>PHOSPHORYLATION [LARGE SCALE ANALYSIS] AT SER-733; SER-736; SER-738 AND SER-797</scope>
    <scope>IDENTIFICATION BY MASS SPECTROMETRY [LARGE SCALE ANALYSIS]</scope>
    <source>
        <tissue>Brain</tissue>
        <tissue>Brown adipose tissue</tissue>
        <tissue>Heart</tissue>
        <tissue>Kidney</tissue>
        <tissue>Liver</tissue>
        <tissue>Lung</tissue>
        <tissue>Spleen</tissue>
        <tissue>Testis</tissue>
    </source>
</reference>
<reference key="10">
    <citation type="journal article" date="2014" name="Mol. Cell. Proteomics">
        <title>Immunoaffinity enrichment and mass spectrometry analysis of protein methylation.</title>
        <authorList>
            <person name="Guo A."/>
            <person name="Gu H."/>
            <person name="Zhou J."/>
            <person name="Mulhern D."/>
            <person name="Wang Y."/>
            <person name="Lee K.A."/>
            <person name="Yang V."/>
            <person name="Aguiar M."/>
            <person name="Kornhauser J."/>
            <person name="Jia X."/>
            <person name="Ren J."/>
            <person name="Beausoleil S.A."/>
            <person name="Silva J.C."/>
            <person name="Vemulapalli V."/>
            <person name="Bedford M.T."/>
            <person name="Comb M.J."/>
        </authorList>
    </citation>
    <scope>METHYLATION [LARGE SCALE ANALYSIS] AT ARG-902</scope>
    <scope>IDENTIFICATION BY MASS SPECTROMETRY [LARGE SCALE ANALYSIS]</scope>
    <source>
        <tissue>Embryo</tissue>
    </source>
</reference>
<protein>
    <recommendedName>
        <fullName evidence="11">RNA-binding protein 10</fullName>
    </recommendedName>
    <alternativeName>
        <fullName>RNA-binding motif protein 10</fullName>
    </alternativeName>
</protein>
<sequence length="930" mass="103494">MEYERRGGRGDRTGRYGATDRSQDDSGENRSRDHDYRDMDYRSYPREYGSQEGKHEYDDSSEEQSAEDSYEASPGSETQRRRRRRHRHSPTGPPGFPRDGDYRDQDYRTEQGEEEEEEDEEEEEEKASNIVMLRMLPQAATEDDIRGQLQSHGVQAREVRLMRNKSSGQSRGFAFVEFSHLQDATRWMEANQHSLNILGQKVSMHYSDPKPKINEDWLCNKCGVQNFKRREKCFKCGVPKSEAEQKLPLGTRLDQQALPLGGRELSQGLLPLPQPYQAQGVLTSQALSQGSEPSSENANDTIILRNLNPHSTMDSILGALAPYAVLSSSNVRVIKDKQTQLNRGFAFIQLSTIVEAAQLLQILQALHPPLTIDGKTINVEFAKGSKRDMASNEGSRINAASVASTAIAAAQWAISQASQGGESAWAAPEEPPVDYSYYQQDEGYGSSQGTDSLYAHGYLKNSKGPGMTGTKGDPAGTGPEASLEAGADSVSLQAFSRAQPGAAPGLYQQSAEGSSGQSTATNSQSYTIISPAVLKAELQSPTQPSSSAFPPATSPTAPEAYSQYPVPDVSTYQYDETSGYYYDPQTGLYYDPNSQYYYNAQSQQYLYWDGERRTYIPALEQSADGHKDTGASSKEGKEKKEKHKTKTAQQIAKDMERWARSLNKQKENFKNSFQPISALRDDERRESATADAGYAILEKKGALAERQHTSMDLPKLASDDRPSPPRGLVAAYSGESDSEEEQERGGPEREEKLTDWQKLACLLCRRQFPSKEALIRHQQLSGLHKQNLEIHRRAHLSENELEALEKNDMEQMKYRDRAAERREKYGIPEPPEPKRRKYGGISTASVDFEQPTRDGLGSDNIGSRMLQAMGWKEGSGLGRKKQGIVTPIEAQTRVRGSGLGARGSSYGVTSTESYKETLHKTMVTRFNEAQ</sequence>
<proteinExistence type="evidence at protein level"/>
<comment type="function">
    <text evidence="2 3">Binds to ssRNA containing the consensus sequence 5'-AGGUAA-3' (By similarity). May be involved in post-transcriptional processing, most probably in mRNA splicing (By similarity). Binds to RNA homopolymers, with a preference for poly(G) and poly(U) and little for poly(A) (By similarity). May bind to specific miRNA hairpins (By similarity).</text>
</comment>
<comment type="subunit">
    <text evidence="1">Associates with the spliceosome. Component of a large chromatin remodeling complex, at least composed of MYSM1, PCAF, RBM10 and KIF11/TRIP5 (By similarity).</text>
</comment>
<comment type="subcellular location">
    <subcellularLocation>
        <location evidence="1">Nucleus</location>
    </subcellularLocation>
</comment>
<comment type="alternative products">
    <event type="alternative splicing"/>
    <event type="alternative initiation"/>
    <isoform>
        <id>Q99KG3-1</id>
        <name>1</name>
        <sequence type="displayed"/>
    </isoform>
    <isoform>
        <id>Q99KG3-2</id>
        <name>2</name>
        <sequence type="described" ref="VSP_034905"/>
    </isoform>
    <isoform>
        <id>Q99KG3-3</id>
        <name>3</name>
        <sequence type="described" ref="VSP_034906"/>
    </isoform>
    <isoform>
        <id>P0DW27-1</id>
        <name>Ribosome biogenesis inhibitor MINAS-60</name>
        <sequence type="external"/>
    </isoform>
</comment>
<comment type="miscellaneous">
    <text evidence="11">RBM10 transcripts also code for an alternative open reading frame (alt-ORF) coding for the MINAS-60 (AC P0DW27) protein (Probable). MINAS-60 and RBM10 ORFs are overlapping and are formed by shifting the reading frame (Probable).</text>
</comment>
<comment type="sequence caution" evidence="11">
    <conflict type="erroneous initiation">
        <sequence resource="EMBL-CDS" id="BAC65490"/>
    </conflict>
    <text>Extended N-terminus.</text>
</comment>
<gene>
    <name evidence="12" type="primary">Rbm10</name>
    <name type="synonym">Kiaa0122</name>
</gene>
<dbReference type="EMBL" id="AK122208">
    <property type="protein sequence ID" value="BAC65490.3"/>
    <property type="status" value="ALT_INIT"/>
    <property type="molecule type" value="Transcribed_RNA"/>
</dbReference>
<dbReference type="EMBL" id="AK089105">
    <property type="protein sequence ID" value="BAC40753.1"/>
    <property type="molecule type" value="mRNA"/>
</dbReference>
<dbReference type="EMBL" id="AK145991">
    <property type="protein sequence ID" value="BAE26813.1"/>
    <property type="molecule type" value="mRNA"/>
</dbReference>
<dbReference type="EMBL" id="AK153736">
    <property type="protein sequence ID" value="BAE32161.1"/>
    <property type="molecule type" value="mRNA"/>
</dbReference>
<dbReference type="EMBL" id="AK167666">
    <property type="protein sequence ID" value="BAE39715.1"/>
    <property type="molecule type" value="mRNA"/>
</dbReference>
<dbReference type="EMBL" id="AL672073">
    <property type="status" value="NOT_ANNOTATED_CDS"/>
    <property type="molecule type" value="Genomic_DNA"/>
</dbReference>
<dbReference type="EMBL" id="AL807240">
    <property type="status" value="NOT_ANNOTATED_CDS"/>
    <property type="molecule type" value="Genomic_DNA"/>
</dbReference>
<dbReference type="EMBL" id="BC004674">
    <property type="protein sequence ID" value="AAH04674.1"/>
    <property type="molecule type" value="mRNA"/>
</dbReference>
<dbReference type="CCDS" id="CCDS40885.1">
    <molecule id="Q99KG3-1"/>
</dbReference>
<dbReference type="CCDS" id="CCDS53013.1">
    <molecule id="Q99KG3-3"/>
</dbReference>
<dbReference type="CCDS" id="CCDS53014.1">
    <molecule id="Q99KG3-2"/>
</dbReference>
<dbReference type="RefSeq" id="NP_001161247.1">
    <molecule id="Q99KG3-3"/>
    <property type="nucleotide sequence ID" value="NM_001167775.2"/>
</dbReference>
<dbReference type="RefSeq" id="NP_001161248.1">
    <molecule id="Q99KG3-2"/>
    <property type="nucleotide sequence ID" value="NM_001167776.2"/>
</dbReference>
<dbReference type="RefSeq" id="NP_001345832.1">
    <molecule id="Q99KG3-3"/>
    <property type="nucleotide sequence ID" value="NM_001358903.1"/>
</dbReference>
<dbReference type="RefSeq" id="NP_663602.1">
    <molecule id="Q99KG3-1"/>
    <property type="nucleotide sequence ID" value="NM_145627.3"/>
</dbReference>
<dbReference type="RefSeq" id="XP_006527681.1">
    <property type="nucleotide sequence ID" value="XM_006527618.3"/>
</dbReference>
<dbReference type="RefSeq" id="XP_036017809.1">
    <molecule id="Q99KG3-2"/>
    <property type="nucleotide sequence ID" value="XM_036161916.1"/>
</dbReference>
<dbReference type="BMRB" id="Q99KG3"/>
<dbReference type="BioGRID" id="231785">
    <property type="interactions" value="5"/>
</dbReference>
<dbReference type="FunCoup" id="Q99KG3">
    <property type="interactions" value="4295"/>
</dbReference>
<dbReference type="IntAct" id="Q99KG3">
    <property type="interactions" value="2"/>
</dbReference>
<dbReference type="MINT" id="Q99KG3"/>
<dbReference type="STRING" id="10090.ENSMUSP00000111032"/>
<dbReference type="GlyGen" id="Q99KG3">
    <property type="glycosylation" value="1 site, 1 O-linked glycan (1 site)"/>
</dbReference>
<dbReference type="iPTMnet" id="Q99KG3"/>
<dbReference type="PhosphoSitePlus" id="Q99KG3"/>
<dbReference type="jPOST" id="Q99KG3"/>
<dbReference type="PaxDb" id="10090-ENSMUSP00000111032"/>
<dbReference type="PeptideAtlas" id="Q99KG3"/>
<dbReference type="ProteomicsDB" id="300256">
    <molecule id="Q99KG3-1"/>
</dbReference>
<dbReference type="ProteomicsDB" id="300257">
    <molecule id="Q99KG3-2"/>
</dbReference>
<dbReference type="ProteomicsDB" id="300258">
    <molecule id="Q99KG3-3"/>
</dbReference>
<dbReference type="Pumba" id="Q99KG3"/>
<dbReference type="Antibodypedia" id="11142">
    <property type="antibodies" value="200 antibodies from 29 providers"/>
</dbReference>
<dbReference type="DNASU" id="236732"/>
<dbReference type="Ensembl" id="ENSMUST00000064911.7">
    <molecule id="Q99KG3-1"/>
    <property type="protein sequence ID" value="ENSMUSP00000068188.7"/>
    <property type="gene ID" value="ENSMUSG00000031060.17"/>
</dbReference>
<dbReference type="Ensembl" id="ENSMUST00000082089.14">
    <molecule id="Q99KG3-2"/>
    <property type="protein sequence ID" value="ENSMUSP00000080738.8"/>
    <property type="gene ID" value="ENSMUSG00000031060.17"/>
</dbReference>
<dbReference type="Ensembl" id="ENSMUST00000084383.10">
    <molecule id="Q99KG3-2"/>
    <property type="protein sequence ID" value="ENSMUSP00000111031.2"/>
    <property type="gene ID" value="ENSMUSG00000031060.17"/>
</dbReference>
<dbReference type="Ensembl" id="ENSMUST00000115374.8">
    <molecule id="Q99KG3-1"/>
    <property type="protein sequence ID" value="ENSMUSP00000111032.2"/>
    <property type="gene ID" value="ENSMUSG00000031060.17"/>
</dbReference>
<dbReference type="Ensembl" id="ENSMUST00000115375.8">
    <molecule id="Q99KG3-3"/>
    <property type="protein sequence ID" value="ENSMUSP00000111033.2"/>
    <property type="gene ID" value="ENSMUSG00000031060.17"/>
</dbReference>
<dbReference type="Ensembl" id="ENSMUST00000177738.8">
    <molecule id="Q99KG3-3"/>
    <property type="protein sequence ID" value="ENSMUSP00000136209.2"/>
    <property type="gene ID" value="ENSMUSG00000031060.17"/>
</dbReference>
<dbReference type="GeneID" id="236732"/>
<dbReference type="KEGG" id="mmu:236732"/>
<dbReference type="UCSC" id="uc009stf.2">
    <molecule id="Q99KG3-3"/>
    <property type="organism name" value="mouse"/>
</dbReference>
<dbReference type="UCSC" id="uc009sth.2">
    <molecule id="Q99KG3-1"/>
    <property type="organism name" value="mouse"/>
</dbReference>
<dbReference type="UCSC" id="uc009sti.2">
    <molecule id="Q99KG3-2"/>
    <property type="organism name" value="mouse"/>
</dbReference>
<dbReference type="AGR" id="MGI:2384310"/>
<dbReference type="CTD" id="8241"/>
<dbReference type="MGI" id="MGI:2384310">
    <property type="gene designation" value="Rbm10"/>
</dbReference>
<dbReference type="VEuPathDB" id="HostDB:ENSMUSG00000031060"/>
<dbReference type="eggNOG" id="KOG0154">
    <property type="taxonomic scope" value="Eukaryota"/>
</dbReference>
<dbReference type="GeneTree" id="ENSGT00940000160369"/>
<dbReference type="HOGENOM" id="CLU_010527_0_0_1"/>
<dbReference type="InParanoid" id="Q99KG3"/>
<dbReference type="OMA" id="CESEHER"/>
<dbReference type="OrthoDB" id="29221at2759"/>
<dbReference type="PhylomeDB" id="Q99KG3"/>
<dbReference type="TreeFam" id="TF315789"/>
<dbReference type="Reactome" id="R-MMU-72163">
    <property type="pathway name" value="mRNA Splicing - Major Pathway"/>
</dbReference>
<dbReference type="Reactome" id="R-MMU-72203">
    <property type="pathway name" value="Processing of Capped Intron-Containing Pre-mRNA"/>
</dbReference>
<dbReference type="BioGRID-ORCS" id="236732">
    <property type="hits" value="5 hits in 79 CRISPR screens"/>
</dbReference>
<dbReference type="ChiTaRS" id="Rbm10">
    <property type="organism name" value="mouse"/>
</dbReference>
<dbReference type="PRO" id="PR:Q99KG3"/>
<dbReference type="Proteomes" id="UP000000589">
    <property type="component" value="Chromosome X"/>
</dbReference>
<dbReference type="RNAct" id="Q99KG3">
    <property type="molecule type" value="protein"/>
</dbReference>
<dbReference type="Bgee" id="ENSMUSG00000031060">
    <property type="expression patterns" value="Expressed in ureteric bud tip and 248 other cell types or tissues"/>
</dbReference>
<dbReference type="GO" id="GO:0016607">
    <property type="term" value="C:nuclear speck"/>
    <property type="evidence" value="ECO:0007669"/>
    <property type="project" value="Ensembl"/>
</dbReference>
<dbReference type="GO" id="GO:0032991">
    <property type="term" value="C:protein-containing complex"/>
    <property type="evidence" value="ECO:0007669"/>
    <property type="project" value="Ensembl"/>
</dbReference>
<dbReference type="GO" id="GO:0042802">
    <property type="term" value="F:identical protein binding"/>
    <property type="evidence" value="ECO:0007669"/>
    <property type="project" value="Ensembl"/>
</dbReference>
<dbReference type="GO" id="GO:0035198">
    <property type="term" value="F:miRNA binding"/>
    <property type="evidence" value="ECO:0000250"/>
    <property type="project" value="UniProtKB"/>
</dbReference>
<dbReference type="GO" id="GO:0008270">
    <property type="term" value="F:zinc ion binding"/>
    <property type="evidence" value="ECO:0007669"/>
    <property type="project" value="UniProtKB-KW"/>
</dbReference>
<dbReference type="GO" id="GO:0070935">
    <property type="term" value="P:3'-UTR-mediated mRNA stabilization"/>
    <property type="evidence" value="ECO:0000314"/>
    <property type="project" value="MGI"/>
</dbReference>
<dbReference type="GO" id="GO:0008285">
    <property type="term" value="P:negative regulation of cell population proliferation"/>
    <property type="evidence" value="ECO:0000314"/>
    <property type="project" value="MGI"/>
</dbReference>
<dbReference type="GO" id="GO:0048025">
    <property type="term" value="P:negative regulation of mRNA splicing, via spliceosome"/>
    <property type="evidence" value="ECO:0000315"/>
    <property type="project" value="MGI"/>
</dbReference>
<dbReference type="GO" id="GO:0000122">
    <property type="term" value="P:negative regulation of transcription by RNA polymerase II"/>
    <property type="evidence" value="ECO:0000314"/>
    <property type="project" value="MGI"/>
</dbReference>
<dbReference type="GO" id="GO:1904706">
    <property type="term" value="P:negative regulation of vascular associated smooth muscle cell proliferation"/>
    <property type="evidence" value="ECO:0000316"/>
    <property type="project" value="MGI"/>
</dbReference>
<dbReference type="GO" id="GO:1905461">
    <property type="term" value="P:positive regulation of vascular associated smooth muscle cell apoptotic process"/>
    <property type="evidence" value="ECO:0000314"/>
    <property type="project" value="MGI"/>
</dbReference>
<dbReference type="GO" id="GO:1905459">
    <property type="term" value="P:regulation of vascular associated smooth muscle cell apoptotic process"/>
    <property type="evidence" value="ECO:0000316"/>
    <property type="project" value="MGI"/>
</dbReference>
<dbReference type="GO" id="GO:1905288">
    <property type="term" value="P:vascular associated smooth muscle cell apoptotic process"/>
    <property type="evidence" value="ECO:0000314"/>
    <property type="project" value="MGI"/>
</dbReference>
<dbReference type="GO" id="GO:1990874">
    <property type="term" value="P:vascular associated smooth muscle cell proliferation"/>
    <property type="evidence" value="ECO:0000316"/>
    <property type="project" value="MGI"/>
</dbReference>
<dbReference type="CDD" id="cd16167">
    <property type="entry name" value="OCRE_RBM10"/>
    <property type="match status" value="1"/>
</dbReference>
<dbReference type="CDD" id="cd12753">
    <property type="entry name" value="RRM1_RBM10"/>
    <property type="match status" value="1"/>
</dbReference>
<dbReference type="CDD" id="cd12754">
    <property type="entry name" value="RRM2_RBM10"/>
    <property type="match status" value="1"/>
</dbReference>
<dbReference type="FunFam" id="3.30.70.330:FF:000110">
    <property type="entry name" value="RNA-binding protein 10 isoform X1"/>
    <property type="match status" value="1"/>
</dbReference>
<dbReference type="FunFam" id="3.30.70.330:FF:000114">
    <property type="entry name" value="RNA-binding protein 10 isoform X1"/>
    <property type="match status" value="1"/>
</dbReference>
<dbReference type="FunFam" id="4.10.1060.10:FF:000005">
    <property type="entry name" value="RNA-binding protein 10 isoform X2"/>
    <property type="match status" value="1"/>
</dbReference>
<dbReference type="Gene3D" id="3.30.70.330">
    <property type="match status" value="2"/>
</dbReference>
<dbReference type="Gene3D" id="4.10.1060.10">
    <property type="entry name" value="Zinc finger, RanBP2-type"/>
    <property type="match status" value="1"/>
</dbReference>
<dbReference type="InterPro" id="IPR000467">
    <property type="entry name" value="G_patch_dom"/>
</dbReference>
<dbReference type="InterPro" id="IPR012677">
    <property type="entry name" value="Nucleotide-bd_a/b_plait_sf"/>
</dbReference>
<dbReference type="InterPro" id="IPR041591">
    <property type="entry name" value="OCRE"/>
</dbReference>
<dbReference type="InterPro" id="IPR035979">
    <property type="entry name" value="RBD_domain_sf"/>
</dbReference>
<dbReference type="InterPro" id="IPR035618">
    <property type="entry name" value="RBM10_OCRE"/>
</dbReference>
<dbReference type="InterPro" id="IPR034992">
    <property type="entry name" value="RBM10_RRM2"/>
</dbReference>
<dbReference type="InterPro" id="IPR000504">
    <property type="entry name" value="RRM_dom"/>
</dbReference>
<dbReference type="InterPro" id="IPR013087">
    <property type="entry name" value="Znf_C2H2_type"/>
</dbReference>
<dbReference type="InterPro" id="IPR001876">
    <property type="entry name" value="Znf_RanBP2"/>
</dbReference>
<dbReference type="InterPro" id="IPR036443">
    <property type="entry name" value="Znf_RanBP2_sf"/>
</dbReference>
<dbReference type="PANTHER" id="PTHR13948">
    <property type="entry name" value="RNA-BINDING PROTEIN"/>
    <property type="match status" value="1"/>
</dbReference>
<dbReference type="PANTHER" id="PTHR13948:SF4">
    <property type="entry name" value="RNA-BINDING PROTEIN 10"/>
    <property type="match status" value="1"/>
</dbReference>
<dbReference type="Pfam" id="PF01585">
    <property type="entry name" value="G-patch"/>
    <property type="match status" value="1"/>
</dbReference>
<dbReference type="Pfam" id="PF17780">
    <property type="entry name" value="OCRE"/>
    <property type="match status" value="1"/>
</dbReference>
<dbReference type="Pfam" id="PF00076">
    <property type="entry name" value="RRM_1"/>
    <property type="match status" value="1"/>
</dbReference>
<dbReference type="Pfam" id="PF00641">
    <property type="entry name" value="Zn_ribbon_RanBP"/>
    <property type="match status" value="1"/>
</dbReference>
<dbReference type="SMART" id="SM00443">
    <property type="entry name" value="G_patch"/>
    <property type="match status" value="1"/>
</dbReference>
<dbReference type="SMART" id="SM00360">
    <property type="entry name" value="RRM"/>
    <property type="match status" value="2"/>
</dbReference>
<dbReference type="SMART" id="SM00547">
    <property type="entry name" value="ZnF_RBZ"/>
    <property type="match status" value="1"/>
</dbReference>
<dbReference type="SUPFAM" id="SSF90209">
    <property type="entry name" value="Ran binding protein zinc finger-like"/>
    <property type="match status" value="1"/>
</dbReference>
<dbReference type="SUPFAM" id="SSF54928">
    <property type="entry name" value="RNA-binding domain, RBD"/>
    <property type="match status" value="2"/>
</dbReference>
<dbReference type="PROSITE" id="PS50174">
    <property type="entry name" value="G_PATCH"/>
    <property type="match status" value="1"/>
</dbReference>
<dbReference type="PROSITE" id="PS50102">
    <property type="entry name" value="RRM"/>
    <property type="match status" value="2"/>
</dbReference>
<dbReference type="PROSITE" id="PS01358">
    <property type="entry name" value="ZF_RANBP2_1"/>
    <property type="match status" value="1"/>
</dbReference>
<dbReference type="PROSITE" id="PS50199">
    <property type="entry name" value="ZF_RANBP2_2"/>
    <property type="match status" value="1"/>
</dbReference>
<dbReference type="PROSITE" id="PS50157">
    <property type="entry name" value="ZINC_FINGER_C2H2_2"/>
    <property type="match status" value="1"/>
</dbReference>
<organism>
    <name type="scientific">Mus musculus</name>
    <name type="common">Mouse</name>
    <dbReference type="NCBI Taxonomy" id="10090"/>
    <lineage>
        <taxon>Eukaryota</taxon>
        <taxon>Metazoa</taxon>
        <taxon>Chordata</taxon>
        <taxon>Craniata</taxon>
        <taxon>Vertebrata</taxon>
        <taxon>Euteleostomi</taxon>
        <taxon>Mammalia</taxon>
        <taxon>Eutheria</taxon>
        <taxon>Euarchontoglires</taxon>
        <taxon>Glires</taxon>
        <taxon>Rodentia</taxon>
        <taxon>Myomorpha</taxon>
        <taxon>Muroidea</taxon>
        <taxon>Muridae</taxon>
        <taxon>Murinae</taxon>
        <taxon>Mus</taxon>
        <taxon>Mus</taxon>
    </lineage>
</organism>
<keyword id="KW-0007">Acetylation</keyword>
<keyword id="KW-0024">Alternative initiation</keyword>
<keyword id="KW-0025">Alternative splicing</keyword>
<keyword id="KW-0479">Metal-binding</keyword>
<keyword id="KW-0488">Methylation</keyword>
<keyword id="KW-0539">Nucleus</keyword>
<keyword id="KW-0597">Phosphoprotein</keyword>
<keyword id="KW-1185">Reference proteome</keyword>
<keyword id="KW-0677">Repeat</keyword>
<keyword id="KW-0694">RNA-binding</keyword>
<keyword id="KW-0862">Zinc</keyword>
<keyword id="KW-0863">Zinc-finger</keyword>
<accession>Q99KG3</accession>
<accession>Q3TIY0</accession>
<accession>Q3U5B8</accession>
<accession>Q3UKI8</accession>
<accession>Q80U75</accession>
<accession>Q8BTP8</accession>
<feature type="chain" id="PRO_0000345017" description="RNA-binding protein 10">
    <location>
        <begin position="1"/>
        <end position="930"/>
    </location>
</feature>
<feature type="domain" description="RRM 1" evidence="6">
    <location>
        <begin position="129"/>
        <end position="209"/>
    </location>
</feature>
<feature type="domain" description="RRM 2" evidence="6">
    <location>
        <begin position="300"/>
        <end position="384"/>
    </location>
</feature>
<feature type="domain" description="G-patch" evidence="5">
    <location>
        <begin position="858"/>
        <end position="904"/>
    </location>
</feature>
<feature type="zinc finger region" description="RanBP2-type" evidence="7">
    <location>
        <begin position="212"/>
        <end position="242"/>
    </location>
</feature>
<feature type="zinc finger region" description="C2H2-type; atypical" evidence="4">
    <location>
        <begin position="759"/>
        <end position="784"/>
    </location>
</feature>
<feature type="region of interest" description="Disordered" evidence="8">
    <location>
        <begin position="1"/>
        <end position="127"/>
    </location>
</feature>
<feature type="region of interest" description="Disordered" evidence="8">
    <location>
        <begin position="464"/>
        <end position="487"/>
    </location>
</feature>
<feature type="region of interest" description="Disordered" evidence="8">
    <location>
        <begin position="503"/>
        <end position="522"/>
    </location>
</feature>
<feature type="region of interest" description="Disordered" evidence="8">
    <location>
        <begin position="537"/>
        <end position="566"/>
    </location>
</feature>
<feature type="region of interest" description="Disordered" evidence="8">
    <location>
        <begin position="620"/>
        <end position="646"/>
    </location>
</feature>
<feature type="region of interest" description="Disordered" evidence="8">
    <location>
        <begin position="712"/>
        <end position="753"/>
    </location>
</feature>
<feature type="region of interest" description="Disordered" evidence="8">
    <location>
        <begin position="818"/>
        <end position="861"/>
    </location>
</feature>
<feature type="compositionally biased region" description="Basic and acidic residues" evidence="8">
    <location>
        <begin position="1"/>
        <end position="14"/>
    </location>
</feature>
<feature type="compositionally biased region" description="Basic and acidic residues" evidence="8">
    <location>
        <begin position="21"/>
        <end position="45"/>
    </location>
</feature>
<feature type="compositionally biased region" description="Acidic residues" evidence="8">
    <location>
        <begin position="59"/>
        <end position="70"/>
    </location>
</feature>
<feature type="compositionally biased region" description="Basic residues" evidence="8">
    <location>
        <begin position="80"/>
        <end position="89"/>
    </location>
</feature>
<feature type="compositionally biased region" description="Basic and acidic residues" evidence="8">
    <location>
        <begin position="98"/>
        <end position="111"/>
    </location>
</feature>
<feature type="compositionally biased region" description="Acidic residues" evidence="8">
    <location>
        <begin position="112"/>
        <end position="125"/>
    </location>
</feature>
<feature type="compositionally biased region" description="Polar residues" evidence="8">
    <location>
        <begin position="507"/>
        <end position="522"/>
    </location>
</feature>
<feature type="compositionally biased region" description="Low complexity" evidence="8">
    <location>
        <begin position="540"/>
        <end position="562"/>
    </location>
</feature>
<feature type="compositionally biased region" description="Basic and acidic residues" evidence="8">
    <location>
        <begin position="623"/>
        <end position="639"/>
    </location>
</feature>
<feature type="compositionally biased region" description="Basic and acidic residues" evidence="8">
    <location>
        <begin position="743"/>
        <end position="753"/>
    </location>
</feature>
<feature type="modified residue" description="Phosphoserine" evidence="3">
    <location>
        <position position="61"/>
    </location>
</feature>
<feature type="modified residue" description="Phosphoserine" evidence="3">
    <location>
        <position position="89"/>
    </location>
</feature>
<feature type="modified residue" description="N6-acetyllysine" evidence="3">
    <location>
        <position position="383"/>
    </location>
</feature>
<feature type="modified residue" description="Phosphoserine" evidence="3">
    <location>
        <position position="718"/>
    </location>
</feature>
<feature type="modified residue" description="Phosphoserine" evidence="3">
    <location>
        <position position="723"/>
    </location>
</feature>
<feature type="modified residue" description="Phosphoserine" evidence="14 15 16">
    <location>
        <position position="733"/>
    </location>
</feature>
<feature type="modified residue" description="Phosphoserine" evidence="13 14 15 16">
    <location>
        <position position="736"/>
    </location>
</feature>
<feature type="modified residue" description="Phosphoserine" evidence="13 14 15 16">
    <location>
        <position position="738"/>
    </location>
</feature>
<feature type="modified residue" description="Phosphoserine" evidence="3">
    <location>
        <position position="781"/>
    </location>
</feature>
<feature type="modified residue" description="Phosphoserine" evidence="16">
    <location>
        <position position="797"/>
    </location>
</feature>
<feature type="modified residue" description="Phosphoserine" evidence="3">
    <location>
        <position position="845"/>
    </location>
</feature>
<feature type="modified residue" description="Omega-N-methylarginine" evidence="17">
    <location>
        <position position="902"/>
    </location>
</feature>
<feature type="splice variant" id="VSP_034905" description="In isoform 2." evidence="9 10">
    <location>
        <begin position="68"/>
        <end position="144"/>
    </location>
</feature>
<feature type="splice variant" id="VSP_034906" description="In isoform 3." evidence="10">
    <location>
        <position position="354"/>
    </location>
</feature>
<feature type="sequence conflict" description="In Ref. 2; BAE26813." evidence="11" ref="2">
    <original>M</original>
    <variation>V</variation>
    <location>
        <position position="188"/>
    </location>
</feature>
<feature type="sequence conflict" description="In Ref. 1; BAC65490." evidence="11" ref="1">
    <original>E</original>
    <variation>VR</variation>
    <location>
        <position position="355"/>
    </location>
</feature>
<feature type="sequence conflict" description="In Ref. 2; BAE39715." evidence="11" ref="2">
    <original>P</original>
    <variation>H</variation>
    <location>
        <position position="428"/>
    </location>
</feature>